<dbReference type="EMBL" id="CP000857">
    <property type="protein sequence ID" value="ACN47886.1"/>
    <property type="molecule type" value="Genomic_DNA"/>
</dbReference>
<dbReference type="RefSeq" id="WP_001519051.1">
    <property type="nucleotide sequence ID" value="NC_012125.1"/>
</dbReference>
<dbReference type="SMR" id="C0Q1X0"/>
<dbReference type="KEGG" id="sei:SPC_3810"/>
<dbReference type="HOGENOM" id="CLU_064548_3_1_6"/>
<dbReference type="Proteomes" id="UP000001599">
    <property type="component" value="Chromosome"/>
</dbReference>
<dbReference type="GO" id="GO:0022625">
    <property type="term" value="C:cytosolic large ribosomal subunit"/>
    <property type="evidence" value="ECO:0007669"/>
    <property type="project" value="TreeGrafter"/>
</dbReference>
<dbReference type="GO" id="GO:0003735">
    <property type="term" value="F:structural constituent of ribosome"/>
    <property type="evidence" value="ECO:0007669"/>
    <property type="project" value="InterPro"/>
</dbReference>
<dbReference type="GO" id="GO:0006412">
    <property type="term" value="P:translation"/>
    <property type="evidence" value="ECO:0007669"/>
    <property type="project" value="UniProtKB-UniRule"/>
</dbReference>
<dbReference type="FunFam" id="2.30.170.40:FF:000001">
    <property type="entry name" value="50S ribosomal protein L28"/>
    <property type="match status" value="1"/>
</dbReference>
<dbReference type="Gene3D" id="2.30.170.40">
    <property type="entry name" value="Ribosomal protein L28/L24"/>
    <property type="match status" value="1"/>
</dbReference>
<dbReference type="HAMAP" id="MF_00373">
    <property type="entry name" value="Ribosomal_bL28"/>
    <property type="match status" value="1"/>
</dbReference>
<dbReference type="InterPro" id="IPR026569">
    <property type="entry name" value="Ribosomal_bL28"/>
</dbReference>
<dbReference type="InterPro" id="IPR034704">
    <property type="entry name" value="Ribosomal_bL28/bL31-like_sf"/>
</dbReference>
<dbReference type="InterPro" id="IPR001383">
    <property type="entry name" value="Ribosomal_bL28_bact-type"/>
</dbReference>
<dbReference type="InterPro" id="IPR037147">
    <property type="entry name" value="Ribosomal_bL28_sf"/>
</dbReference>
<dbReference type="NCBIfam" id="TIGR00009">
    <property type="entry name" value="L28"/>
    <property type="match status" value="1"/>
</dbReference>
<dbReference type="PANTHER" id="PTHR13528">
    <property type="entry name" value="39S RIBOSOMAL PROTEIN L28, MITOCHONDRIAL"/>
    <property type="match status" value="1"/>
</dbReference>
<dbReference type="PANTHER" id="PTHR13528:SF2">
    <property type="entry name" value="LARGE RIBOSOMAL SUBUNIT PROTEIN BL28M"/>
    <property type="match status" value="1"/>
</dbReference>
<dbReference type="Pfam" id="PF00830">
    <property type="entry name" value="Ribosomal_L28"/>
    <property type="match status" value="1"/>
</dbReference>
<dbReference type="SUPFAM" id="SSF143800">
    <property type="entry name" value="L28p-like"/>
    <property type="match status" value="1"/>
</dbReference>
<sequence length="78" mass="9051">MSRVCQVTGKRPVTGNNRSHALNATKRRFLPNLHSHRFWVESEKRFVTLRVSAKGMRIIDKKGIETVLSELRARGEKY</sequence>
<keyword id="KW-0687">Ribonucleoprotein</keyword>
<keyword id="KW-0689">Ribosomal protein</keyword>
<organism>
    <name type="scientific">Salmonella paratyphi C (strain RKS4594)</name>
    <dbReference type="NCBI Taxonomy" id="476213"/>
    <lineage>
        <taxon>Bacteria</taxon>
        <taxon>Pseudomonadati</taxon>
        <taxon>Pseudomonadota</taxon>
        <taxon>Gammaproteobacteria</taxon>
        <taxon>Enterobacterales</taxon>
        <taxon>Enterobacteriaceae</taxon>
        <taxon>Salmonella</taxon>
    </lineage>
</organism>
<accession>C0Q1X0</accession>
<gene>
    <name evidence="1" type="primary">rpmB</name>
    <name type="ordered locus">SPC_3810</name>
</gene>
<evidence type="ECO:0000255" key="1">
    <source>
        <dbReference type="HAMAP-Rule" id="MF_00373"/>
    </source>
</evidence>
<evidence type="ECO:0000305" key="2"/>
<name>RL28_SALPC</name>
<feature type="chain" id="PRO_1000195937" description="Large ribosomal subunit protein bL28">
    <location>
        <begin position="1"/>
        <end position="78"/>
    </location>
</feature>
<comment type="similarity">
    <text evidence="1">Belongs to the bacterial ribosomal protein bL28 family.</text>
</comment>
<protein>
    <recommendedName>
        <fullName evidence="1">Large ribosomal subunit protein bL28</fullName>
    </recommendedName>
    <alternativeName>
        <fullName evidence="2">50S ribosomal protein L28</fullName>
    </alternativeName>
</protein>
<reference key="1">
    <citation type="journal article" date="2009" name="PLoS ONE">
        <title>Salmonella paratyphi C: genetic divergence from Salmonella choleraesuis and pathogenic convergence with Salmonella typhi.</title>
        <authorList>
            <person name="Liu W.-Q."/>
            <person name="Feng Y."/>
            <person name="Wang Y."/>
            <person name="Zou Q.-H."/>
            <person name="Chen F."/>
            <person name="Guo J.-T."/>
            <person name="Peng Y.-H."/>
            <person name="Jin Y."/>
            <person name="Li Y.-G."/>
            <person name="Hu S.-N."/>
            <person name="Johnston R.N."/>
            <person name="Liu G.-R."/>
            <person name="Liu S.-L."/>
        </authorList>
    </citation>
    <scope>NUCLEOTIDE SEQUENCE [LARGE SCALE GENOMIC DNA]</scope>
    <source>
        <strain>RKS4594</strain>
    </source>
</reference>
<proteinExistence type="inferred from homology"/>